<organism>
    <name type="scientific">Aliivibrio fischeri (strain ATCC 700601 / ES114)</name>
    <name type="common">Vibrio fischeri</name>
    <dbReference type="NCBI Taxonomy" id="312309"/>
    <lineage>
        <taxon>Bacteria</taxon>
        <taxon>Pseudomonadati</taxon>
        <taxon>Pseudomonadota</taxon>
        <taxon>Gammaproteobacteria</taxon>
        <taxon>Vibrionales</taxon>
        <taxon>Vibrionaceae</taxon>
        <taxon>Aliivibrio</taxon>
    </lineage>
</organism>
<dbReference type="EMBL" id="CP000020">
    <property type="protein sequence ID" value="AAW84514.1"/>
    <property type="molecule type" value="Genomic_DNA"/>
</dbReference>
<dbReference type="RefSeq" id="WP_005416800.1">
    <property type="nucleotide sequence ID" value="NZ_CAWLES010000001.1"/>
</dbReference>
<dbReference type="RefSeq" id="YP_203402.1">
    <property type="nucleotide sequence ID" value="NC_006840.2"/>
</dbReference>
<dbReference type="SMR" id="Q5E8Y2"/>
<dbReference type="STRING" id="312309.VF_0019"/>
<dbReference type="EnsemblBacteria" id="AAW84514">
    <property type="protein sequence ID" value="AAW84514"/>
    <property type="gene ID" value="VF_0019"/>
</dbReference>
<dbReference type="GeneID" id="54162648"/>
<dbReference type="KEGG" id="vfi:VF_0019"/>
<dbReference type="PATRIC" id="fig|312309.11.peg.20"/>
<dbReference type="eggNOG" id="COG0425">
    <property type="taxonomic scope" value="Bacteria"/>
</dbReference>
<dbReference type="HOGENOM" id="CLU_165255_5_0_6"/>
<dbReference type="OrthoDB" id="9797352at2"/>
<dbReference type="Proteomes" id="UP000000537">
    <property type="component" value="Chromosome I"/>
</dbReference>
<dbReference type="GO" id="GO:0005737">
    <property type="term" value="C:cytoplasm"/>
    <property type="evidence" value="ECO:0007669"/>
    <property type="project" value="UniProtKB-SubCell"/>
</dbReference>
<dbReference type="GO" id="GO:0097163">
    <property type="term" value="F:sulfur carrier activity"/>
    <property type="evidence" value="ECO:0007669"/>
    <property type="project" value="UniProtKB-UniRule"/>
</dbReference>
<dbReference type="GO" id="GO:0002143">
    <property type="term" value="P:tRNA wobble position uridine thiolation"/>
    <property type="evidence" value="ECO:0007669"/>
    <property type="project" value="InterPro"/>
</dbReference>
<dbReference type="CDD" id="cd03423">
    <property type="entry name" value="SirA"/>
    <property type="match status" value="1"/>
</dbReference>
<dbReference type="Gene3D" id="3.30.110.40">
    <property type="entry name" value="TusA-like domain"/>
    <property type="match status" value="1"/>
</dbReference>
<dbReference type="HAMAP" id="MF_00413">
    <property type="entry name" value="Thiourid_synth_A"/>
    <property type="match status" value="1"/>
</dbReference>
<dbReference type="InterPro" id="IPR022931">
    <property type="entry name" value="Sulphur_carrier_TusA"/>
</dbReference>
<dbReference type="InterPro" id="IPR001455">
    <property type="entry name" value="TusA-like"/>
</dbReference>
<dbReference type="InterPro" id="IPR036868">
    <property type="entry name" value="TusA-like_sf"/>
</dbReference>
<dbReference type="NCBIfam" id="NF001423">
    <property type="entry name" value="PRK00299.1"/>
    <property type="match status" value="1"/>
</dbReference>
<dbReference type="PANTHER" id="PTHR33279:SF2">
    <property type="entry name" value="SULFUR CARRIER PROTEIN TUSA"/>
    <property type="match status" value="1"/>
</dbReference>
<dbReference type="PANTHER" id="PTHR33279">
    <property type="entry name" value="SULFUR CARRIER PROTEIN YEDF-RELATED"/>
    <property type="match status" value="1"/>
</dbReference>
<dbReference type="Pfam" id="PF01206">
    <property type="entry name" value="TusA"/>
    <property type="match status" value="1"/>
</dbReference>
<dbReference type="SUPFAM" id="SSF64307">
    <property type="entry name" value="SirA-like"/>
    <property type="match status" value="1"/>
</dbReference>
<dbReference type="PROSITE" id="PS01148">
    <property type="entry name" value="UPF0033"/>
    <property type="match status" value="1"/>
</dbReference>
<protein>
    <recommendedName>
        <fullName evidence="1">Sulfur carrier protein TusA</fullName>
    </recommendedName>
</protein>
<sequence>MTINFDTATQTLEAEGLRCPEPVMMVRKTIRKMEDGETLLIKADDPSTTRDIPSFCRFMDHELIAEDTDSLPYRYLIRKGLSK</sequence>
<evidence type="ECO:0000255" key="1">
    <source>
        <dbReference type="HAMAP-Rule" id="MF_00413"/>
    </source>
</evidence>
<proteinExistence type="inferred from homology"/>
<comment type="function">
    <text evidence="1">Sulfur carrier protein which probably makes part of a sulfur-relay system.</text>
</comment>
<comment type="subcellular location">
    <subcellularLocation>
        <location evidence="1">Cytoplasm</location>
    </subcellularLocation>
</comment>
<comment type="similarity">
    <text evidence="1">Belongs to the sulfur carrier protein TusA family.</text>
</comment>
<feature type="chain" id="PRO_0000159056" description="Sulfur carrier protein TusA">
    <location>
        <begin position="1"/>
        <end position="83"/>
    </location>
</feature>
<feature type="active site" description="Cysteine persulfide intermediate" evidence="1">
    <location>
        <position position="19"/>
    </location>
</feature>
<gene>
    <name evidence="1" type="primary">tusA</name>
    <name type="ordered locus">VF_0019</name>
</gene>
<keyword id="KW-0963">Cytoplasm</keyword>
<keyword id="KW-1185">Reference proteome</keyword>
<name>TUSA_ALIF1</name>
<reference key="1">
    <citation type="journal article" date="2005" name="Proc. Natl. Acad. Sci. U.S.A.">
        <title>Complete genome sequence of Vibrio fischeri: a symbiotic bacterium with pathogenic congeners.</title>
        <authorList>
            <person name="Ruby E.G."/>
            <person name="Urbanowski M."/>
            <person name="Campbell J."/>
            <person name="Dunn A."/>
            <person name="Faini M."/>
            <person name="Gunsalus R."/>
            <person name="Lostroh P."/>
            <person name="Lupp C."/>
            <person name="McCann J."/>
            <person name="Millikan D."/>
            <person name="Schaefer A."/>
            <person name="Stabb E."/>
            <person name="Stevens A."/>
            <person name="Visick K."/>
            <person name="Whistler C."/>
            <person name="Greenberg E.P."/>
        </authorList>
    </citation>
    <scope>NUCLEOTIDE SEQUENCE [LARGE SCALE GENOMIC DNA]</scope>
    <source>
        <strain>ATCC 700601 / ES114</strain>
    </source>
</reference>
<accession>Q5E8Y2</accession>